<comment type="function">
    <text evidence="1">Part of a stress-induced multi-chaperone system, it is involved in the recovery of the cell from heat-induced damage, in cooperation with DnaK, DnaJ and GrpE. Acts before DnaK, in the processing of protein aggregates. Protein binding stimulates the ATPase activity; ATP hydrolysis unfolds the denatured protein aggregates, which probably helps expose new hydrophobic binding sites on the surface of ClpB-bound aggregates, contributing to the solubilization and refolding of denatured protein aggregates by DnaK (By similarity).</text>
</comment>
<comment type="subunit">
    <text evidence="1">Homohexamer. The oligomerization is ATP-dependent (By similarity).</text>
</comment>
<comment type="subcellular location">
    <subcellularLocation>
        <location evidence="3">Cytoplasm</location>
    </subcellularLocation>
</comment>
<comment type="domain">
    <text evidence="1">The Clp repeat (R) domain probably functions as a substrate-discriminating domain, recruiting aggregated proteins to the ClpB hexamer and/or stabilizing bound proteins. The NBD2 domain is responsible for oligomerization, whereas the NBD1 domain stabilizes the hexamer probably in an ATP-dependent manner. The movement of the coiled-coil domain is essential for ClpB ability to rescue proteins from an aggregated state, probably by pulling apart large aggregated proteins, which are bound between the coiled-coils motifs of adjacent ClpB subunits in the functional hexamer (By similarity).</text>
</comment>
<comment type="similarity">
    <text evidence="3">Belongs to the ClpA/ClpB family.</text>
</comment>
<reference key="1">
    <citation type="journal article" date="2001" name="Proc. Natl. Acad. Sci. U.S.A.">
        <title>Complete genomic sequence of Pasteurella multocida Pm70.</title>
        <authorList>
            <person name="May B.J."/>
            <person name="Zhang Q."/>
            <person name="Li L.L."/>
            <person name="Paustian M.L."/>
            <person name="Whittam T.S."/>
            <person name="Kapur V."/>
        </authorList>
    </citation>
    <scope>NUCLEOTIDE SEQUENCE [LARGE SCALE GENOMIC DNA]</scope>
    <source>
        <strain>Pm70</strain>
    </source>
</reference>
<name>CLPB_PASMU</name>
<protein>
    <recommendedName>
        <fullName>Chaperone protein ClpB</fullName>
    </recommendedName>
</protein>
<proteinExistence type="inferred from homology"/>
<accession>Q9CKC0</accession>
<evidence type="ECO:0000250" key="1"/>
<evidence type="ECO:0000255" key="2">
    <source>
        <dbReference type="PROSITE-ProRule" id="PRU01251"/>
    </source>
</evidence>
<evidence type="ECO:0000305" key="3"/>
<dbReference type="EMBL" id="AE004439">
    <property type="protein sequence ID" value="AAK03788.1"/>
    <property type="molecule type" value="Genomic_DNA"/>
</dbReference>
<dbReference type="RefSeq" id="WP_005755290.1">
    <property type="nucleotide sequence ID" value="NC_002663.1"/>
</dbReference>
<dbReference type="SMR" id="Q9CKC0"/>
<dbReference type="STRING" id="272843.PM1704"/>
<dbReference type="EnsemblBacteria" id="AAK03788">
    <property type="protein sequence ID" value="AAK03788"/>
    <property type="gene ID" value="PM1704"/>
</dbReference>
<dbReference type="KEGG" id="pmu:PM1704"/>
<dbReference type="PATRIC" id="fig|272843.6.peg.1725"/>
<dbReference type="HOGENOM" id="CLU_005070_1_0_6"/>
<dbReference type="OrthoDB" id="9803641at2"/>
<dbReference type="Proteomes" id="UP000000809">
    <property type="component" value="Chromosome"/>
</dbReference>
<dbReference type="GO" id="GO:0005737">
    <property type="term" value="C:cytoplasm"/>
    <property type="evidence" value="ECO:0007669"/>
    <property type="project" value="UniProtKB-SubCell"/>
</dbReference>
<dbReference type="GO" id="GO:0005524">
    <property type="term" value="F:ATP binding"/>
    <property type="evidence" value="ECO:0007669"/>
    <property type="project" value="UniProtKB-KW"/>
</dbReference>
<dbReference type="GO" id="GO:0016887">
    <property type="term" value="F:ATP hydrolysis activity"/>
    <property type="evidence" value="ECO:0007669"/>
    <property type="project" value="InterPro"/>
</dbReference>
<dbReference type="GO" id="GO:0034605">
    <property type="term" value="P:cellular response to heat"/>
    <property type="evidence" value="ECO:0007669"/>
    <property type="project" value="TreeGrafter"/>
</dbReference>
<dbReference type="GO" id="GO:0042026">
    <property type="term" value="P:protein refolding"/>
    <property type="evidence" value="ECO:0007669"/>
    <property type="project" value="InterPro"/>
</dbReference>
<dbReference type="CDD" id="cd00009">
    <property type="entry name" value="AAA"/>
    <property type="match status" value="1"/>
</dbReference>
<dbReference type="CDD" id="cd19499">
    <property type="entry name" value="RecA-like_ClpB_Hsp104-like"/>
    <property type="match status" value="1"/>
</dbReference>
<dbReference type="FunFam" id="1.10.1780.10:FF:000003">
    <property type="entry name" value="ATP-dependent chaperone ClpB"/>
    <property type="match status" value="1"/>
</dbReference>
<dbReference type="FunFam" id="1.10.8.60:FF:000017">
    <property type="entry name" value="ATP-dependent chaperone ClpB"/>
    <property type="match status" value="1"/>
</dbReference>
<dbReference type="FunFam" id="3.40.50.300:FF:000120">
    <property type="entry name" value="ATP-dependent chaperone ClpB"/>
    <property type="match status" value="1"/>
</dbReference>
<dbReference type="FunFam" id="3.40.50.300:FF:000025">
    <property type="entry name" value="ATP-dependent Clp protease subunit"/>
    <property type="match status" value="1"/>
</dbReference>
<dbReference type="FunFam" id="3.40.50.300:FF:000010">
    <property type="entry name" value="Chaperone clpB 1, putative"/>
    <property type="match status" value="1"/>
</dbReference>
<dbReference type="Gene3D" id="1.10.8.60">
    <property type="match status" value="1"/>
</dbReference>
<dbReference type="Gene3D" id="1.10.1780.10">
    <property type="entry name" value="Clp, N-terminal domain"/>
    <property type="match status" value="1"/>
</dbReference>
<dbReference type="Gene3D" id="3.40.50.300">
    <property type="entry name" value="P-loop containing nucleotide triphosphate hydrolases"/>
    <property type="match status" value="3"/>
</dbReference>
<dbReference type="InterPro" id="IPR003593">
    <property type="entry name" value="AAA+_ATPase"/>
</dbReference>
<dbReference type="InterPro" id="IPR003959">
    <property type="entry name" value="ATPase_AAA_core"/>
</dbReference>
<dbReference type="InterPro" id="IPR017730">
    <property type="entry name" value="Chaperonin_ClpB"/>
</dbReference>
<dbReference type="InterPro" id="IPR019489">
    <property type="entry name" value="Clp_ATPase_C"/>
</dbReference>
<dbReference type="InterPro" id="IPR036628">
    <property type="entry name" value="Clp_N_dom_sf"/>
</dbReference>
<dbReference type="InterPro" id="IPR004176">
    <property type="entry name" value="Clp_R_dom"/>
</dbReference>
<dbReference type="InterPro" id="IPR001270">
    <property type="entry name" value="ClpA/B"/>
</dbReference>
<dbReference type="InterPro" id="IPR018368">
    <property type="entry name" value="ClpA/B_CS1"/>
</dbReference>
<dbReference type="InterPro" id="IPR028299">
    <property type="entry name" value="ClpA/B_CS2"/>
</dbReference>
<dbReference type="InterPro" id="IPR041546">
    <property type="entry name" value="ClpA/ClpB_AAA_lid"/>
</dbReference>
<dbReference type="InterPro" id="IPR050130">
    <property type="entry name" value="ClpA_ClpB"/>
</dbReference>
<dbReference type="InterPro" id="IPR027417">
    <property type="entry name" value="P-loop_NTPase"/>
</dbReference>
<dbReference type="NCBIfam" id="TIGR03346">
    <property type="entry name" value="chaperone_ClpB"/>
    <property type="match status" value="1"/>
</dbReference>
<dbReference type="NCBIfam" id="NF008118">
    <property type="entry name" value="PRK10865.1"/>
    <property type="match status" value="1"/>
</dbReference>
<dbReference type="PANTHER" id="PTHR11638">
    <property type="entry name" value="ATP-DEPENDENT CLP PROTEASE"/>
    <property type="match status" value="1"/>
</dbReference>
<dbReference type="PANTHER" id="PTHR11638:SF18">
    <property type="entry name" value="HEAT SHOCK PROTEIN 104"/>
    <property type="match status" value="1"/>
</dbReference>
<dbReference type="Pfam" id="PF00004">
    <property type="entry name" value="AAA"/>
    <property type="match status" value="1"/>
</dbReference>
<dbReference type="Pfam" id="PF07724">
    <property type="entry name" value="AAA_2"/>
    <property type="match status" value="1"/>
</dbReference>
<dbReference type="Pfam" id="PF17871">
    <property type="entry name" value="AAA_lid_9"/>
    <property type="match status" value="1"/>
</dbReference>
<dbReference type="Pfam" id="PF02861">
    <property type="entry name" value="Clp_N"/>
    <property type="match status" value="2"/>
</dbReference>
<dbReference type="Pfam" id="PF10431">
    <property type="entry name" value="ClpB_D2-small"/>
    <property type="match status" value="1"/>
</dbReference>
<dbReference type="PRINTS" id="PR00300">
    <property type="entry name" value="CLPPROTEASEA"/>
</dbReference>
<dbReference type="SMART" id="SM00382">
    <property type="entry name" value="AAA"/>
    <property type="match status" value="2"/>
</dbReference>
<dbReference type="SMART" id="SM01086">
    <property type="entry name" value="ClpB_D2-small"/>
    <property type="match status" value="1"/>
</dbReference>
<dbReference type="SUPFAM" id="SSF81923">
    <property type="entry name" value="Double Clp-N motif"/>
    <property type="match status" value="1"/>
</dbReference>
<dbReference type="SUPFAM" id="SSF52540">
    <property type="entry name" value="P-loop containing nucleoside triphosphate hydrolases"/>
    <property type="match status" value="2"/>
</dbReference>
<dbReference type="PROSITE" id="PS51903">
    <property type="entry name" value="CLP_R"/>
    <property type="match status" value="1"/>
</dbReference>
<dbReference type="PROSITE" id="PS00870">
    <property type="entry name" value="CLPAB_1"/>
    <property type="match status" value="1"/>
</dbReference>
<dbReference type="PROSITE" id="PS00871">
    <property type="entry name" value="CLPAB_2"/>
    <property type="match status" value="1"/>
</dbReference>
<keyword id="KW-0067">ATP-binding</keyword>
<keyword id="KW-0143">Chaperone</keyword>
<keyword id="KW-0175">Coiled coil</keyword>
<keyword id="KW-0963">Cytoplasm</keyword>
<keyword id="KW-0547">Nucleotide-binding</keyword>
<keyword id="KW-1185">Reference proteome</keyword>
<keyword id="KW-0677">Repeat</keyword>
<keyword id="KW-0346">Stress response</keyword>
<sequence>MNIEKFTTKFQQALQEAQSLAIGKDNQFIEPVHLLTALLNQQGGSTAPILTASGANLPLLRNELNAELSKLPQVSGSGGDVQVSRSLVNLLNLCDKLAQQRQDKFISSELFLLAALEDKTLGDVLKKCGVKKENLQQAIEKVRGGQNVNDPNAEESRQALEKYTIDLTARAESGKLDPVIGRDEEIRRAIQVLQRRTKNNPVLIGEPGVGKTAIVEGLAQRIVNGEVPEGLKNKRVLSLDMGALIAGAKYRGEFEERLKAVLNELSKEEGRVILFIDEIHTMVGAGKTDGAMDAGNLLKPSLARGELHCVGATTLDEYRQYIEKDAALERRFQKVFVGEPTVEDTIAILRGLKERYEIHHHVQITDPAIVAAATLSHRYVSDRQLPDKAIDLIDEAASSIRMEIDSKPQPLDRLERRIIQLKLEQQALQKEDDDASRKRLAMLEKELGEKEREYAELEDVWKAEKAALSGTQHIKAELDSAKTQMEQARRASDFAKMSELQYGVIPALEKQLAQAESAEGKEMTLLRYRVTDEEIAEVLSRATGIPVAKMMEGEKEKLLRMEEELHKRVIGQHEAIEAVSNAIRRSRAGLSDPNRPIGSFLFLGPTGVGKTELCKTLANFLFDDENAMVRIDMSEFMEKHSVSRLVGAPPGYVGYEEGGYLTEAVRRRPYSVILLDEVEKAHHDVFNILLQVLDDGRLTDGQGRTVDFRNTVVIMTSNLGSHLIQENSTLDYPSMKELVMSVVGQHFRPEFINRIDETVVFHPLGKENIREIATIQLARLIKRMESHGYQLHFTDACLDFIGEVGYDPVYGARPLKRAIQQEIENPLAQQILSGKLLPNQLVTIDYVDGKVIANQ</sequence>
<organism>
    <name type="scientific">Pasteurella multocida (strain Pm70)</name>
    <dbReference type="NCBI Taxonomy" id="272843"/>
    <lineage>
        <taxon>Bacteria</taxon>
        <taxon>Pseudomonadati</taxon>
        <taxon>Pseudomonadota</taxon>
        <taxon>Gammaproteobacteria</taxon>
        <taxon>Pasteurellales</taxon>
        <taxon>Pasteurellaceae</taxon>
        <taxon>Pasteurella</taxon>
    </lineage>
</organism>
<gene>
    <name type="primary">clpB</name>
    <name type="ordered locus">PM1704</name>
</gene>
<feature type="chain" id="PRO_0000191152" description="Chaperone protein ClpB">
    <location>
        <begin position="1"/>
        <end position="855"/>
    </location>
</feature>
<feature type="domain" description="Clp R" evidence="2">
    <location>
        <begin position="3"/>
        <end position="145"/>
    </location>
</feature>
<feature type="region of interest" description="Repeat 1" evidence="2">
    <location>
        <begin position="6"/>
        <end position="71"/>
    </location>
</feature>
<feature type="region of interest" description="Repeat 2" evidence="2">
    <location>
        <begin position="83"/>
        <end position="145"/>
    </location>
</feature>
<feature type="region of interest" description="NBD1" evidence="1">
    <location>
        <begin position="158"/>
        <end position="339"/>
    </location>
</feature>
<feature type="region of interest" description="Linker" evidence="1">
    <location>
        <begin position="340"/>
        <end position="544"/>
    </location>
</feature>
<feature type="region of interest" description="NBD2" evidence="1">
    <location>
        <begin position="554"/>
        <end position="763"/>
    </location>
</feature>
<feature type="region of interest" description="C-terminal" evidence="1">
    <location>
        <begin position="764"/>
        <end position="855"/>
    </location>
</feature>
<feature type="coiled-coil region" evidence="1">
    <location>
        <begin position="390"/>
        <end position="522"/>
    </location>
</feature>
<feature type="binding site" evidence="1">
    <location>
        <begin position="205"/>
        <end position="212"/>
    </location>
    <ligand>
        <name>ATP</name>
        <dbReference type="ChEBI" id="CHEBI:30616"/>
        <label>1</label>
    </ligand>
</feature>
<feature type="binding site" evidence="1">
    <location>
        <begin position="604"/>
        <end position="611"/>
    </location>
    <ligand>
        <name>ATP</name>
        <dbReference type="ChEBI" id="CHEBI:30616"/>
        <label>2</label>
    </ligand>
</feature>